<keyword id="KW-0067">ATP-binding</keyword>
<keyword id="KW-0093">Biotin biosynthesis</keyword>
<keyword id="KW-0436">Ligase</keyword>
<keyword id="KW-0460">Magnesium</keyword>
<keyword id="KW-0547">Nucleotide-binding</keyword>
<keyword id="KW-1185">Reference proteome</keyword>
<evidence type="ECO:0000255" key="1">
    <source>
        <dbReference type="HAMAP-Rule" id="MF_00668"/>
    </source>
</evidence>
<dbReference type="EC" id="6.2.1.14" evidence="1"/>
<dbReference type="EMBL" id="CP001878">
    <property type="protein sequence ID" value="ADC51262.1"/>
    <property type="molecule type" value="Genomic_DNA"/>
</dbReference>
<dbReference type="RefSeq" id="WP_012958624.1">
    <property type="nucleotide sequence ID" value="NC_013791.2"/>
</dbReference>
<dbReference type="SMR" id="D3G0V0"/>
<dbReference type="STRING" id="398511.BpOF4_16065"/>
<dbReference type="KEGG" id="bpf:BpOF4_16065"/>
<dbReference type="eggNOG" id="COG1424">
    <property type="taxonomic scope" value="Bacteria"/>
</dbReference>
<dbReference type="HOGENOM" id="CLU_076858_0_0_9"/>
<dbReference type="UniPathway" id="UPA00999">
    <property type="reaction ID" value="UER00351"/>
</dbReference>
<dbReference type="Proteomes" id="UP000001544">
    <property type="component" value="Chromosome"/>
</dbReference>
<dbReference type="GO" id="GO:0042410">
    <property type="term" value="F:6-carboxyhexanoate-CoA ligase activity"/>
    <property type="evidence" value="ECO:0007669"/>
    <property type="project" value="UniProtKB-UniRule"/>
</dbReference>
<dbReference type="GO" id="GO:0005524">
    <property type="term" value="F:ATP binding"/>
    <property type="evidence" value="ECO:0007669"/>
    <property type="project" value="UniProtKB-KW"/>
</dbReference>
<dbReference type="GO" id="GO:0000287">
    <property type="term" value="F:magnesium ion binding"/>
    <property type="evidence" value="ECO:0007669"/>
    <property type="project" value="UniProtKB-UniRule"/>
</dbReference>
<dbReference type="GO" id="GO:0009102">
    <property type="term" value="P:biotin biosynthetic process"/>
    <property type="evidence" value="ECO:0007669"/>
    <property type="project" value="UniProtKB-UniRule"/>
</dbReference>
<dbReference type="HAMAP" id="MF_00668">
    <property type="entry name" value="BioW"/>
    <property type="match status" value="1"/>
</dbReference>
<dbReference type="InterPro" id="IPR005499">
    <property type="entry name" value="BioW"/>
</dbReference>
<dbReference type="NCBIfam" id="TIGR01204">
    <property type="entry name" value="bioW"/>
    <property type="match status" value="1"/>
</dbReference>
<dbReference type="NCBIfam" id="NF002360">
    <property type="entry name" value="PRK01322.1"/>
    <property type="match status" value="1"/>
</dbReference>
<dbReference type="Pfam" id="PF03744">
    <property type="entry name" value="BioW"/>
    <property type="match status" value="1"/>
</dbReference>
<gene>
    <name evidence="1" type="primary">bioW</name>
    <name type="ordered locus">BpOF4_16065</name>
</gene>
<sequence length="273" mass="30650">MQHEHIYFSVRMRAAQGGSHEQGGKHISGGEKIVPYHDLSSCMAELAEKGLNHSRGKPDFMNIQFEQIEEAVKYVSPLPVGTHVVSSVADGQATARSLLTEAGIKPQVIEEAYYVLSELTELRGALFIDAATGQRLDDPIKNGVRVTRMDWPLDDFSCWLNEHQLSPNIRMKEALALATKVTQHPATIAELCWSDDPDYITGYVASQKFGYQRISQLKELGEEKGCRIFFVDQTKMKNLDAYINYLTTQPVLIRWKQEVMADESRSMAGRAAE</sequence>
<proteinExistence type="inferred from homology"/>
<reference key="1">
    <citation type="journal article" date="2011" name="Environ. Microbiol.">
        <title>Genome of alkaliphilic Bacillus pseudofirmus OF4 reveals adaptations that support the ability to grow in an external pH range from 7.5 to 11.4.</title>
        <authorList>
            <person name="Janto B."/>
            <person name="Ahmed A."/>
            <person name="Ito M."/>
            <person name="Liu J."/>
            <person name="Hicks D.B."/>
            <person name="Pagni S."/>
            <person name="Fackelmayer O.J."/>
            <person name="Smith T.A."/>
            <person name="Earl J."/>
            <person name="Elbourne L.D."/>
            <person name="Hassan K."/>
            <person name="Paulsen I.T."/>
            <person name="Kolsto A.B."/>
            <person name="Tourasse N.J."/>
            <person name="Ehrlich G.D."/>
            <person name="Boissy R."/>
            <person name="Ivey D.M."/>
            <person name="Li G."/>
            <person name="Xue Y."/>
            <person name="Ma Y."/>
            <person name="Hu F.Z."/>
            <person name="Krulwich T.A."/>
        </authorList>
    </citation>
    <scope>NUCLEOTIDE SEQUENCE [LARGE SCALE GENOMIC DNA]</scope>
    <source>
        <strain>ATCC BAA-2126 / JCM 17055 / OF4</strain>
    </source>
</reference>
<accession>D3G0V0</accession>
<comment type="function">
    <text evidence="1">Catalyzes the transformation of pimelate into pimeloyl-CoA with concomitant hydrolysis of ATP to AMP.</text>
</comment>
<comment type="catalytic activity">
    <reaction evidence="1">
        <text>heptanedioate + ATP + CoA = 6-carboxyhexanoyl-CoA + AMP + diphosphate</text>
        <dbReference type="Rhea" id="RHEA:14781"/>
        <dbReference type="ChEBI" id="CHEBI:30616"/>
        <dbReference type="ChEBI" id="CHEBI:33019"/>
        <dbReference type="ChEBI" id="CHEBI:36165"/>
        <dbReference type="ChEBI" id="CHEBI:57287"/>
        <dbReference type="ChEBI" id="CHEBI:57360"/>
        <dbReference type="ChEBI" id="CHEBI:456215"/>
        <dbReference type="EC" id="6.2.1.14"/>
    </reaction>
</comment>
<comment type="cofactor">
    <cofactor evidence="1">
        <name>Mg(2+)</name>
        <dbReference type="ChEBI" id="CHEBI:18420"/>
    </cofactor>
</comment>
<comment type="pathway">
    <text evidence="1">Metabolic intermediate metabolism; pimeloyl-CoA biosynthesis; pimeloyl-CoA from pimelate: step 1/1.</text>
</comment>
<comment type="subunit">
    <text evidence="1">Homodimer.</text>
</comment>
<comment type="similarity">
    <text evidence="1">Belongs to the BioW family.</text>
</comment>
<feature type="chain" id="PRO_0000412079" description="6-carboxyhexanoate--CoA ligase">
    <location>
        <begin position="1"/>
        <end position="273"/>
    </location>
</feature>
<protein>
    <recommendedName>
        <fullName evidence="1">6-carboxyhexanoate--CoA ligase</fullName>
        <ecNumber evidence="1">6.2.1.14</ecNumber>
    </recommendedName>
    <alternativeName>
        <fullName evidence="1">Pimeloyl-CoA synthase</fullName>
    </alternativeName>
</protein>
<organism>
    <name type="scientific">Alkalihalophilus pseudofirmus (strain ATCC BAA-2126 / JCM 17055 / OF4)</name>
    <name type="common">Bacillus pseudofirmus</name>
    <dbReference type="NCBI Taxonomy" id="398511"/>
    <lineage>
        <taxon>Bacteria</taxon>
        <taxon>Bacillati</taxon>
        <taxon>Bacillota</taxon>
        <taxon>Bacilli</taxon>
        <taxon>Bacillales</taxon>
        <taxon>Bacillaceae</taxon>
        <taxon>Alkalihalophilus</taxon>
    </lineage>
</organism>
<name>BIOW_ALKPO</name>